<gene>
    <name evidence="1" type="primary">acsF</name>
    <name type="synonym">ycf59</name>
</gene>
<name>ACSF_PORPU</name>
<keyword id="KW-0149">Chlorophyll biosynthesis</keyword>
<keyword id="KW-0150">Chloroplast</keyword>
<keyword id="KW-0408">Iron</keyword>
<keyword id="KW-0479">Metal-binding</keyword>
<keyword id="KW-0521">NADP</keyword>
<keyword id="KW-0560">Oxidoreductase</keyword>
<keyword id="KW-0602">Photosynthesis</keyword>
<keyword id="KW-0934">Plastid</keyword>
<feature type="chain" id="PRO_0000217544" description="Magnesium-protoporphyrin IX monomethyl ester [oxidative] cyclase">
    <location>
        <begin position="1"/>
        <end position="349"/>
    </location>
</feature>
<reference key="1">
    <citation type="journal article" date="1995" name="Plant Mol. Biol. Rep.">
        <title>Complete nucleotide sequence of the Porphyra purpurea chloroplast genome.</title>
        <authorList>
            <person name="Reith M.E."/>
            <person name="Munholland J."/>
        </authorList>
    </citation>
    <scope>NUCLEOTIDE SEQUENCE [LARGE SCALE GENOMIC DNA]</scope>
    <source>
        <strain>Avonport</strain>
    </source>
</reference>
<accession>P51277</accession>
<dbReference type="EC" id="1.14.13.81" evidence="1"/>
<dbReference type="EMBL" id="U38804">
    <property type="protein sequence ID" value="AAC08163.1"/>
    <property type="molecule type" value="Genomic_DNA"/>
</dbReference>
<dbReference type="PIR" id="S73198">
    <property type="entry name" value="S73198"/>
</dbReference>
<dbReference type="RefSeq" id="NP_053887.1">
    <property type="nucleotide sequence ID" value="NC_000925.1"/>
</dbReference>
<dbReference type="GeneID" id="809907"/>
<dbReference type="UniPathway" id="UPA00670"/>
<dbReference type="GO" id="GO:0009507">
    <property type="term" value="C:chloroplast"/>
    <property type="evidence" value="ECO:0007669"/>
    <property type="project" value="UniProtKB-SubCell"/>
</dbReference>
<dbReference type="GO" id="GO:0005506">
    <property type="term" value="F:iron ion binding"/>
    <property type="evidence" value="ECO:0007669"/>
    <property type="project" value="UniProtKB-UniRule"/>
</dbReference>
<dbReference type="GO" id="GO:0048529">
    <property type="term" value="F:magnesium-protoporphyrin IX monomethyl ester (oxidative) cyclase activity"/>
    <property type="evidence" value="ECO:0007669"/>
    <property type="project" value="UniProtKB-UniRule"/>
</dbReference>
<dbReference type="GO" id="GO:0036068">
    <property type="term" value="P:light-independent chlorophyll biosynthetic process"/>
    <property type="evidence" value="ECO:0007669"/>
    <property type="project" value="UniProtKB-UniRule"/>
</dbReference>
<dbReference type="GO" id="GO:0015979">
    <property type="term" value="P:photosynthesis"/>
    <property type="evidence" value="ECO:0007669"/>
    <property type="project" value="UniProtKB-UniRule"/>
</dbReference>
<dbReference type="CDD" id="cd01047">
    <property type="entry name" value="ACSF"/>
    <property type="match status" value="1"/>
</dbReference>
<dbReference type="HAMAP" id="MF_01840">
    <property type="entry name" value="AcsF"/>
    <property type="match status" value="1"/>
</dbReference>
<dbReference type="InterPro" id="IPR008434">
    <property type="entry name" value="AcsF"/>
</dbReference>
<dbReference type="InterPro" id="IPR009078">
    <property type="entry name" value="Ferritin-like_SF"/>
</dbReference>
<dbReference type="InterPro" id="IPR003251">
    <property type="entry name" value="Rr_diiron-bd_dom"/>
</dbReference>
<dbReference type="NCBIfam" id="TIGR02029">
    <property type="entry name" value="AcsF"/>
    <property type="match status" value="1"/>
</dbReference>
<dbReference type="NCBIfam" id="NF010172">
    <property type="entry name" value="PRK13654.1"/>
    <property type="match status" value="1"/>
</dbReference>
<dbReference type="PANTHER" id="PTHR31053">
    <property type="entry name" value="MAGNESIUM-PROTOPORPHYRIN IX MONOMETHYL ESTER [OXIDATIVE] CYCLASE, CHLOROPLASTIC"/>
    <property type="match status" value="1"/>
</dbReference>
<dbReference type="PANTHER" id="PTHR31053:SF2">
    <property type="entry name" value="MAGNESIUM-PROTOPORPHYRIN IX MONOMETHYL ESTER [OXIDATIVE] CYCLASE, CHLOROPLASTIC"/>
    <property type="match status" value="1"/>
</dbReference>
<dbReference type="Pfam" id="PF02915">
    <property type="entry name" value="Rubrerythrin"/>
    <property type="match status" value="1"/>
</dbReference>
<dbReference type="SUPFAM" id="SSF47240">
    <property type="entry name" value="Ferritin-like"/>
    <property type="match status" value="1"/>
</dbReference>
<protein>
    <recommendedName>
        <fullName evidence="1">Magnesium-protoporphyrin IX monomethyl ester [oxidative] cyclase</fullName>
        <shortName evidence="1">Mg-protoporphyrin IX monomethyl ester oxidative cyclase</shortName>
        <ecNumber evidence="1">1.14.13.81</ecNumber>
    </recommendedName>
</protein>
<comment type="function">
    <text evidence="1">Catalyzes the formation of the isocyclic ring in chlorophyll biosynthesis. Mediates the cyclase reaction, which results in the formation of divinylprotochlorophyllide (Pchlide) characteristic of all chlorophylls from magnesium-protoporphyrin IX 13-monomethyl ester (MgPMME).</text>
</comment>
<comment type="catalytic activity">
    <reaction evidence="1">
        <text>Mg-protoporphyrin IX 13-monomethyl ester + 3 NADPH + 3 O2 + 2 H(+) = 3,8-divinyl protochlorophyllide a + 3 NADP(+) + 5 H2O</text>
        <dbReference type="Rhea" id="RHEA:33235"/>
        <dbReference type="ChEBI" id="CHEBI:15377"/>
        <dbReference type="ChEBI" id="CHEBI:15378"/>
        <dbReference type="ChEBI" id="CHEBI:15379"/>
        <dbReference type="ChEBI" id="CHEBI:57783"/>
        <dbReference type="ChEBI" id="CHEBI:58349"/>
        <dbReference type="ChEBI" id="CHEBI:58632"/>
        <dbReference type="ChEBI" id="CHEBI:60491"/>
        <dbReference type="EC" id="1.14.13.81"/>
    </reaction>
</comment>
<comment type="cofactor">
    <cofactor evidence="1">
        <name>Fe cation</name>
        <dbReference type="ChEBI" id="CHEBI:24875"/>
    </cofactor>
</comment>
<comment type="pathway">
    <text evidence="1">Porphyrin-containing compound metabolism; chlorophyll biosynthesis (light-independent).</text>
</comment>
<comment type="subcellular location">
    <subcellularLocation>
        <location>Plastid</location>
        <location>Chloroplast</location>
    </subcellularLocation>
</comment>
<comment type="similarity">
    <text evidence="1">Belongs to the AcsF family.</text>
</comment>
<proteinExistence type="inferred from homology"/>
<geneLocation type="chloroplast"/>
<sequence length="349" mass="41550">MQTTIQKEEAPNRETLLTPRFYTTDFEEMASMNISENEQDFFAILEEFRADYNSQHFIRGEEFNQSWSNLETKTKSLFIEFLERSCTAEFSGFLLYKELSRKLKDSNPIIAECFLLMSRDEARHAGFLNKAIGDFNLSLDLGFLTKTRKYTFFSPKFIFYATYLSEKIGYWRYITIYRHMEQYPEHRIYPIFKFFENWCQDENRHGDFFAALLKSQPHFLNDWKAKMWCRFFLLSVFATMYLNDFQRIDFYNAIGLDSRQYDMQVIRKTNESAARVFPVALDVDNPKFFKYLDSCACNNRALIDIDKKGSQPLVKTFMKAPLYMSLILNLIKIYLIKPIDSQAVWNTVR</sequence>
<evidence type="ECO:0000255" key="1">
    <source>
        <dbReference type="HAMAP-Rule" id="MF_01840"/>
    </source>
</evidence>
<organism>
    <name type="scientific">Porphyra purpurea</name>
    <name type="common">Red seaweed</name>
    <name type="synonym">Ulva purpurea</name>
    <dbReference type="NCBI Taxonomy" id="2787"/>
    <lineage>
        <taxon>Eukaryota</taxon>
        <taxon>Rhodophyta</taxon>
        <taxon>Bangiophyceae</taxon>
        <taxon>Bangiales</taxon>
        <taxon>Bangiaceae</taxon>
        <taxon>Porphyra</taxon>
    </lineage>
</organism>